<feature type="chain" id="PRO_1000076712" description="DNA mismatch repair protein MutL">
    <location>
        <begin position="1"/>
        <end position="619"/>
    </location>
</feature>
<organism>
    <name type="scientific">Shewanella frigidimarina (strain NCIMB 400)</name>
    <dbReference type="NCBI Taxonomy" id="318167"/>
    <lineage>
        <taxon>Bacteria</taxon>
        <taxon>Pseudomonadati</taxon>
        <taxon>Pseudomonadota</taxon>
        <taxon>Gammaproteobacteria</taxon>
        <taxon>Alteromonadales</taxon>
        <taxon>Shewanellaceae</taxon>
        <taxon>Shewanella</taxon>
    </lineage>
</organism>
<sequence length="619" mass="68934">MAIQLLPPQLANQIAAGEVVERPASVVKELVENSLDAGATRVDIDIDKGGSKLIRIRDNGAGIAKDELALALSRHATSKVHTLDDLEAILSFGFRGEALASISSVSRLTLTSKTAEQSEAWQAYAEGSQMDVKVTPAAHPQGSTIEVVDLFFNTPARRRFLKSDKTEFTHIDEWLKRIAIVRSDIHFTLTHNAKLVRQYRPANTDIQTQQRLAQICGRAFADQALSIACEHDDFVLTGYLQSPQDTVITDTNFFYVNGRLIRDRLVNHAVKQAFAEYGIEHQPGYVLMLSLDPHQVDVNVHPAKHEVRFHQSRYVHDFILQAVRSALVEMPALPLSDELEHHDNVAPMHTESNLMHDVKVVDTAEDEFTLNHGSSKAINSVSQFGSMHVPGKNNGLSGGYSAAIKPSYDKKPSSASSAQTKTAIANYGQLLHTPMNSAVSYVHEAAPQVTMPPLLAGEHWVICKDDKLSLLPIKSVLLAVRKKDVETKLANGLVSQPLLMPVSIAADLDWIETLAVRDQLLRQMGIELTIRFQQLIIKKVPPYLRECQLAIVIPELLQWIQLEQPTQSAIVGWLAQQSLSQFEPAQALWLQFCSLDDETQQTCYAQERIIPWQNWMKDN</sequence>
<name>MUTL_SHEFN</name>
<gene>
    <name evidence="1" type="primary">mutL</name>
    <name type="ordered locus">Sfri_3313</name>
</gene>
<comment type="function">
    <text evidence="1">This protein is involved in the repair of mismatches in DNA. It is required for dam-dependent methyl-directed DNA mismatch repair. May act as a 'molecular matchmaker', a protein that promotes the formation of a stable complex between two or more DNA-binding proteins in an ATP-dependent manner without itself being part of a final effector complex.</text>
</comment>
<comment type="similarity">
    <text evidence="1">Belongs to the DNA mismatch repair MutL/HexB family.</text>
</comment>
<dbReference type="EMBL" id="CP000447">
    <property type="protein sequence ID" value="ABI73149.1"/>
    <property type="molecule type" value="Genomic_DNA"/>
</dbReference>
<dbReference type="RefSeq" id="WP_011638752.1">
    <property type="nucleotide sequence ID" value="NC_008345.1"/>
</dbReference>
<dbReference type="SMR" id="Q07XW5"/>
<dbReference type="STRING" id="318167.Sfri_3313"/>
<dbReference type="KEGG" id="sfr:Sfri_3313"/>
<dbReference type="eggNOG" id="COG0323">
    <property type="taxonomic scope" value="Bacteria"/>
</dbReference>
<dbReference type="HOGENOM" id="CLU_004131_5_1_6"/>
<dbReference type="OrthoDB" id="9763467at2"/>
<dbReference type="Proteomes" id="UP000000684">
    <property type="component" value="Chromosome"/>
</dbReference>
<dbReference type="GO" id="GO:0032300">
    <property type="term" value="C:mismatch repair complex"/>
    <property type="evidence" value="ECO:0007669"/>
    <property type="project" value="InterPro"/>
</dbReference>
<dbReference type="GO" id="GO:0005524">
    <property type="term" value="F:ATP binding"/>
    <property type="evidence" value="ECO:0007669"/>
    <property type="project" value="InterPro"/>
</dbReference>
<dbReference type="GO" id="GO:0016887">
    <property type="term" value="F:ATP hydrolysis activity"/>
    <property type="evidence" value="ECO:0007669"/>
    <property type="project" value="InterPro"/>
</dbReference>
<dbReference type="GO" id="GO:0140664">
    <property type="term" value="F:ATP-dependent DNA damage sensor activity"/>
    <property type="evidence" value="ECO:0007669"/>
    <property type="project" value="InterPro"/>
</dbReference>
<dbReference type="GO" id="GO:0030983">
    <property type="term" value="F:mismatched DNA binding"/>
    <property type="evidence" value="ECO:0007669"/>
    <property type="project" value="InterPro"/>
</dbReference>
<dbReference type="GO" id="GO:0006298">
    <property type="term" value="P:mismatch repair"/>
    <property type="evidence" value="ECO:0007669"/>
    <property type="project" value="UniProtKB-UniRule"/>
</dbReference>
<dbReference type="CDD" id="cd16926">
    <property type="entry name" value="HATPase_MutL-MLH-PMS-like"/>
    <property type="match status" value="1"/>
</dbReference>
<dbReference type="CDD" id="cd03482">
    <property type="entry name" value="MutL_Trans_MutL"/>
    <property type="match status" value="1"/>
</dbReference>
<dbReference type="FunFam" id="3.30.565.10:FF:000003">
    <property type="entry name" value="DNA mismatch repair endonuclease MutL"/>
    <property type="match status" value="1"/>
</dbReference>
<dbReference type="Gene3D" id="3.30.230.10">
    <property type="match status" value="1"/>
</dbReference>
<dbReference type="Gene3D" id="3.30.565.10">
    <property type="entry name" value="Histidine kinase-like ATPase, C-terminal domain"/>
    <property type="match status" value="1"/>
</dbReference>
<dbReference type="Gene3D" id="3.30.1370.100">
    <property type="entry name" value="MutL, C-terminal domain, regulatory subdomain"/>
    <property type="match status" value="1"/>
</dbReference>
<dbReference type="HAMAP" id="MF_00149">
    <property type="entry name" value="DNA_mis_repair"/>
    <property type="match status" value="1"/>
</dbReference>
<dbReference type="InterPro" id="IPR014762">
    <property type="entry name" value="DNA_mismatch_repair_CS"/>
</dbReference>
<dbReference type="InterPro" id="IPR020667">
    <property type="entry name" value="DNA_mismatch_repair_MutL"/>
</dbReference>
<dbReference type="InterPro" id="IPR013507">
    <property type="entry name" value="DNA_mismatch_S5_2-like"/>
</dbReference>
<dbReference type="InterPro" id="IPR036890">
    <property type="entry name" value="HATPase_C_sf"/>
</dbReference>
<dbReference type="InterPro" id="IPR002099">
    <property type="entry name" value="MutL/Mlh/PMS"/>
</dbReference>
<dbReference type="InterPro" id="IPR038973">
    <property type="entry name" value="MutL/Mlh/Pms-like"/>
</dbReference>
<dbReference type="InterPro" id="IPR014790">
    <property type="entry name" value="MutL_C"/>
</dbReference>
<dbReference type="InterPro" id="IPR042121">
    <property type="entry name" value="MutL_C_regsub"/>
</dbReference>
<dbReference type="InterPro" id="IPR037198">
    <property type="entry name" value="MutL_C_sf"/>
</dbReference>
<dbReference type="InterPro" id="IPR020568">
    <property type="entry name" value="Ribosomal_Su5_D2-typ_SF"/>
</dbReference>
<dbReference type="InterPro" id="IPR014721">
    <property type="entry name" value="Ribsml_uS5_D2-typ_fold_subgr"/>
</dbReference>
<dbReference type="NCBIfam" id="TIGR00585">
    <property type="entry name" value="mutl"/>
    <property type="match status" value="1"/>
</dbReference>
<dbReference type="NCBIfam" id="NF000948">
    <property type="entry name" value="PRK00095.1-1"/>
    <property type="match status" value="1"/>
</dbReference>
<dbReference type="PANTHER" id="PTHR10073">
    <property type="entry name" value="DNA MISMATCH REPAIR PROTEIN MLH, PMS, MUTL"/>
    <property type="match status" value="1"/>
</dbReference>
<dbReference type="PANTHER" id="PTHR10073:SF12">
    <property type="entry name" value="DNA MISMATCH REPAIR PROTEIN MLH1"/>
    <property type="match status" value="1"/>
</dbReference>
<dbReference type="Pfam" id="PF01119">
    <property type="entry name" value="DNA_mis_repair"/>
    <property type="match status" value="1"/>
</dbReference>
<dbReference type="Pfam" id="PF13589">
    <property type="entry name" value="HATPase_c_3"/>
    <property type="match status" value="1"/>
</dbReference>
<dbReference type="Pfam" id="PF08676">
    <property type="entry name" value="MutL_C"/>
    <property type="match status" value="1"/>
</dbReference>
<dbReference type="SMART" id="SM01340">
    <property type="entry name" value="DNA_mis_repair"/>
    <property type="match status" value="1"/>
</dbReference>
<dbReference type="SMART" id="SM00853">
    <property type="entry name" value="MutL_C"/>
    <property type="match status" value="1"/>
</dbReference>
<dbReference type="SUPFAM" id="SSF55874">
    <property type="entry name" value="ATPase domain of HSP90 chaperone/DNA topoisomerase II/histidine kinase"/>
    <property type="match status" value="1"/>
</dbReference>
<dbReference type="SUPFAM" id="SSF118116">
    <property type="entry name" value="DNA mismatch repair protein MutL"/>
    <property type="match status" value="1"/>
</dbReference>
<dbReference type="SUPFAM" id="SSF54211">
    <property type="entry name" value="Ribosomal protein S5 domain 2-like"/>
    <property type="match status" value="1"/>
</dbReference>
<dbReference type="PROSITE" id="PS00058">
    <property type="entry name" value="DNA_MISMATCH_REPAIR_1"/>
    <property type="match status" value="1"/>
</dbReference>
<protein>
    <recommendedName>
        <fullName evidence="1">DNA mismatch repair protein MutL</fullName>
    </recommendedName>
</protein>
<proteinExistence type="inferred from homology"/>
<keyword id="KW-0227">DNA damage</keyword>
<keyword id="KW-0234">DNA repair</keyword>
<keyword id="KW-1185">Reference proteome</keyword>
<accession>Q07XW5</accession>
<reference key="1">
    <citation type="submission" date="2006-08" db="EMBL/GenBank/DDBJ databases">
        <title>Complete sequence of Shewanella frigidimarina NCIMB 400.</title>
        <authorList>
            <consortium name="US DOE Joint Genome Institute"/>
            <person name="Copeland A."/>
            <person name="Lucas S."/>
            <person name="Lapidus A."/>
            <person name="Barry K."/>
            <person name="Detter J.C."/>
            <person name="Glavina del Rio T."/>
            <person name="Hammon N."/>
            <person name="Israni S."/>
            <person name="Dalin E."/>
            <person name="Tice H."/>
            <person name="Pitluck S."/>
            <person name="Fredrickson J.K."/>
            <person name="Kolker E."/>
            <person name="McCuel L.A."/>
            <person name="DiChristina T."/>
            <person name="Nealson K.H."/>
            <person name="Newman D."/>
            <person name="Tiedje J.M."/>
            <person name="Zhou J."/>
            <person name="Romine M.F."/>
            <person name="Culley D.E."/>
            <person name="Serres M."/>
            <person name="Chertkov O."/>
            <person name="Brettin T."/>
            <person name="Bruce D."/>
            <person name="Han C."/>
            <person name="Tapia R."/>
            <person name="Gilna P."/>
            <person name="Schmutz J."/>
            <person name="Larimer F."/>
            <person name="Land M."/>
            <person name="Hauser L."/>
            <person name="Kyrpides N."/>
            <person name="Mikhailova N."/>
            <person name="Richardson P."/>
        </authorList>
    </citation>
    <scope>NUCLEOTIDE SEQUENCE [LARGE SCALE GENOMIC DNA]</scope>
    <source>
        <strain>NCIMB 400</strain>
    </source>
</reference>
<evidence type="ECO:0000255" key="1">
    <source>
        <dbReference type="HAMAP-Rule" id="MF_00149"/>
    </source>
</evidence>